<reference key="1">
    <citation type="journal article" date="2003" name="Sci. China, Ser. C, Life Sci.">
        <title>Characterization of an ethylene receptor homolog gene from rice.</title>
        <authorList>
            <person name="Cao W.H."/>
            <person name="Dong Y."/>
            <person name="Zhang J.S."/>
            <person name="Chen S.Y."/>
        </authorList>
    </citation>
    <scope>NUCLEOTIDE SEQUENCE [MRNA]</scope>
    <source>
        <strain>cv. Lansheng</strain>
    </source>
</reference>
<reference key="2">
    <citation type="journal article" date="2005" name="Nature">
        <title>The map-based sequence of the rice genome.</title>
        <authorList>
            <consortium name="International rice genome sequencing project (IRGSP)"/>
        </authorList>
    </citation>
    <scope>NUCLEOTIDE SEQUENCE [LARGE SCALE GENOMIC DNA]</scope>
    <source>
        <strain>cv. Nipponbare</strain>
    </source>
</reference>
<reference key="3">
    <citation type="journal article" date="2008" name="Nucleic Acids Res.">
        <title>The rice annotation project database (RAP-DB): 2008 update.</title>
        <authorList>
            <consortium name="The rice annotation project (RAP)"/>
        </authorList>
    </citation>
    <scope>GENOME REANNOTATION</scope>
    <source>
        <strain>cv. Nipponbare</strain>
    </source>
</reference>
<reference key="4">
    <citation type="journal article" date="2013" name="Rice">
        <title>Improvement of the Oryza sativa Nipponbare reference genome using next generation sequence and optical map data.</title>
        <authorList>
            <person name="Kawahara Y."/>
            <person name="de la Bastide M."/>
            <person name="Hamilton J.P."/>
            <person name="Kanamori H."/>
            <person name="McCombie W.R."/>
            <person name="Ouyang S."/>
            <person name="Schwartz D.C."/>
            <person name="Tanaka T."/>
            <person name="Wu J."/>
            <person name="Zhou S."/>
            <person name="Childs K.L."/>
            <person name="Davidson R.M."/>
            <person name="Lin H."/>
            <person name="Quesada-Ocampo L."/>
            <person name="Vaillancourt B."/>
            <person name="Sakai H."/>
            <person name="Lee S.S."/>
            <person name="Kim J."/>
            <person name="Numa H."/>
            <person name="Itoh T."/>
            <person name="Buell C.R."/>
            <person name="Matsumoto T."/>
        </authorList>
    </citation>
    <scope>GENOME REANNOTATION</scope>
    <source>
        <strain>cv. Nipponbare</strain>
    </source>
</reference>
<reference key="5">
    <citation type="journal article" date="2003" name="Science">
        <title>Collection, mapping, and annotation of over 28,000 cDNA clones from japonica rice.</title>
        <authorList>
            <consortium name="The rice full-length cDNA consortium"/>
        </authorList>
    </citation>
    <scope>NUCLEOTIDE SEQUENCE [LARGE SCALE MRNA] (ISOFORM 2)</scope>
    <source>
        <strain>cv. Nipponbare</strain>
    </source>
</reference>
<reference key="6">
    <citation type="journal article" date="2009" name="Plant Cell">
        <title>The ethylene receptor ETR2 delays floral transition and affects starch accumulation in rice.</title>
        <authorList>
            <person name="Wuriyanghan H."/>
            <person name="Zhang B."/>
            <person name="Cao W.H."/>
            <person name="Ma B."/>
            <person name="Lei G."/>
            <person name="Liu Y.F."/>
            <person name="Wei W."/>
            <person name="Wu H.J."/>
            <person name="Chen L.J."/>
            <person name="Chen H.W."/>
            <person name="Cao Y.R."/>
            <person name="He S.J."/>
            <person name="Zhang W.K."/>
            <person name="Wang X.J."/>
            <person name="Chen S.Y."/>
            <person name="Zhang J.S."/>
        </authorList>
    </citation>
    <scope>FUNCTION</scope>
    <scope>DISRUPTION PHENOTYPE</scope>
</reference>
<protein>
    <recommendedName>
        <fullName evidence="6">Ethylene receptor 3</fullName>
        <shortName evidence="6">OsETR3</shortName>
        <ecNumber evidence="6">2.7.13.3</ecNumber>
    </recommendedName>
    <alternativeName>
        <fullName evidence="7">OsPK2</fullName>
    </alternativeName>
</protein>
<name>ETR3_ORYSJ</name>
<sequence>MLLSTWTPGCFQGNKILLRSLITWYYLEFMPKLRPFYFLFYLTLPSCATDSPPISDKSSSIFLPLAQQQQLVHWMMPPRFRCQDYLLPLLLALSPAAAAAREVEYHHCHCDGGGGGGGGGLWSMDSIFRWQKVSDLLIAAAYFSIPLEILYFVAGLRHLLPFRWVLVQFGAFIVLCGLTHLLTAFTYEPHPFMVVLLLTTAKFLTALVSFLTAITLLTLIPQLLRVKVRESLLWLKARELDREVVLMKRQEEASWHVRMLTHEIRKSLDRHTVLYTTLIELSRVLGLTNCAVWMPAAGEMCLTHELRRDGGGEDGVVGVDDADVVEVRGSDGVKLLGPDSVLAAASGGKEEGTGAVAAIRMPMLKVSDFKGGTPEVIQTSYAVLVLVPPAGKSWGRHEMEIVEVVAGQVAVALSHATLLEESRAMRDRLAEQNRELLQARRDALMANEARQAFQGVMSQGMRRPIHSILGLVSMVQEEALAPEQRLVVDTMARTATVVSTLVNDVMEMSADSRERFPLETRPFHLHAMIRDAACVARCLCDFRGFGFAVHVENALPDLVVGDERRIFHVLLHMVGNLIGRTEPGHVTLRVRAADDDVLDDRLGQRWDPWWPSYSTGYSSVKFVIGVKRQQNGDAGSPLSRRPSGKGIDLRLSFSMCRKLVQMMQGNIWAILDPQGLPESMTLVLRFQLQSPLTSSSLGGSFEQKHSSPSCQIAGLKVLLIDDDDDINLVVARKLLEKLGCVVSSPPSGSGFLSSVGSSAAAFQLVMVNLEMKRVKALDVATRISQYRSGRWPIVMAMASDQKAWEKCAQSGINGILKKPVILQELKDELARILQST</sequence>
<proteinExistence type="evidence at transcript level"/>
<gene>
    <name type="primary">ETR3</name>
    <name evidence="10" type="ordered locus">Os02g0820900</name>
    <name evidence="6" type="ordered locus">LOC_Os02g57530</name>
    <name evidence="8" type="ORF">OJ1119_A01.4-1</name>
    <name evidence="9" type="ORF">P0474F11.19-1</name>
</gene>
<comment type="function">
    <text evidence="5">Ethylene receptor related to bacterial two-component regulators. Acts as a negative regulator of ethylene signaling. May delay the transition from the vegetative stage to the floral stage by up-regulating GI (GIGANTEA) and RCN1 and cause starch accumulation in stems by down-regulating the alpha-amylase AMY3D.</text>
</comment>
<comment type="catalytic activity">
    <reaction evidence="6">
        <text>ATP + protein L-histidine = ADP + protein N-phospho-L-histidine.</text>
        <dbReference type="EC" id="2.7.13.3"/>
    </reaction>
</comment>
<comment type="cofactor">
    <cofactor evidence="1">
        <name>Cu cation</name>
        <dbReference type="ChEBI" id="CHEBI:23378"/>
    </cofactor>
    <text evidence="1">Binds 1 copper ion per dimer.</text>
</comment>
<comment type="subcellular location">
    <subcellularLocation>
        <location evidence="1">Endoplasmic reticulum membrane</location>
        <topology evidence="2">Multi-pass membrane protein</topology>
    </subcellularLocation>
</comment>
<comment type="alternative products">
    <event type="alternative splicing"/>
    <isoform>
        <id>Q0DWC7-1</id>
        <name>1</name>
        <sequence type="displayed"/>
    </isoform>
    <isoform>
        <id>Q0DWC7-2</id>
        <name>2</name>
        <sequence type="described" ref="VSP_057847"/>
    </isoform>
</comment>
<comment type="disruption phenotype">
    <text evidence="5">Enhanced ethylene sensitivity and early flowering.</text>
</comment>
<comment type="similarity">
    <text evidence="6">Belongs to the ethylene receptor family.</text>
</comment>
<comment type="sequence caution" evidence="6">
    <conflict type="erroneous gene model prediction">
        <sequence resource="EMBL-CDS" id="BAD22880"/>
    </conflict>
</comment>
<comment type="sequence caution" evidence="6">
    <conflict type="erroneous gene model prediction">
        <sequence resource="EMBL-CDS" id="BAD23112"/>
    </conflict>
</comment>
<evidence type="ECO:0000250" key="1">
    <source>
        <dbReference type="UniProtKB" id="P49333"/>
    </source>
</evidence>
<evidence type="ECO:0000255" key="2"/>
<evidence type="ECO:0000255" key="3">
    <source>
        <dbReference type="PROSITE-ProRule" id="PRU00107"/>
    </source>
</evidence>
<evidence type="ECO:0000255" key="4">
    <source>
        <dbReference type="PROSITE-ProRule" id="PRU00169"/>
    </source>
</evidence>
<evidence type="ECO:0000269" key="5">
    <source>
    </source>
</evidence>
<evidence type="ECO:0000305" key="6"/>
<evidence type="ECO:0000312" key="7">
    <source>
        <dbReference type="EMBL" id="AAL29303.2"/>
    </source>
</evidence>
<evidence type="ECO:0000312" key="8">
    <source>
        <dbReference type="EMBL" id="BAD22879.1"/>
    </source>
</evidence>
<evidence type="ECO:0000312" key="9">
    <source>
        <dbReference type="EMBL" id="BAD23111.1"/>
    </source>
</evidence>
<evidence type="ECO:0000312" key="10">
    <source>
        <dbReference type="EMBL" id="BAF10461.1"/>
    </source>
</evidence>
<feature type="chain" id="PRO_0000433867" description="Ethylene receptor 3">
    <location>
        <begin position="1"/>
        <end position="836"/>
    </location>
</feature>
<feature type="transmembrane region" description="Helical" evidence="2">
    <location>
        <begin position="137"/>
        <end position="157"/>
    </location>
</feature>
<feature type="transmembrane region" description="Helical" evidence="2">
    <location>
        <begin position="166"/>
        <end position="186"/>
    </location>
</feature>
<feature type="transmembrane region" description="Helical" evidence="2">
    <location>
        <begin position="204"/>
        <end position="224"/>
    </location>
</feature>
<feature type="domain" description="GAF" evidence="6">
    <location>
        <begin position="269"/>
        <end position="413"/>
    </location>
</feature>
<feature type="domain" description="Histidine kinase" evidence="3">
    <location>
        <begin position="457"/>
        <end position="691"/>
    </location>
</feature>
<feature type="domain" description="Response regulatory" evidence="4">
    <location>
        <begin position="718"/>
        <end position="834"/>
    </location>
</feature>
<feature type="coiled-coil region" evidence="2">
    <location>
        <begin position="416"/>
        <end position="452"/>
    </location>
</feature>
<feature type="binding site" evidence="1">
    <location>
        <position position="176"/>
    </location>
    <ligand>
        <name>Cu cation</name>
        <dbReference type="ChEBI" id="CHEBI:23378"/>
    </ligand>
</feature>
<feature type="binding site" evidence="1">
    <location>
        <position position="180"/>
    </location>
    <ligand>
        <name>Cu cation</name>
        <dbReference type="ChEBI" id="CHEBI:23378"/>
    </ligand>
</feature>
<feature type="splice variant" id="VSP_057847" description="In isoform 2.">
    <original>MLLSTWTPGCFQGNKILLRSLITWYYLEFMPKLRPFYFLFYLTLPSCATDSPPISDKSSSIFLPLAQ</original>
    <variation>M</variation>
    <location>
        <begin position="1"/>
        <end position="67"/>
    </location>
</feature>
<feature type="sequence conflict" description="In Ref. 1; AAL29303." evidence="6" ref="1">
    <original>AARE</original>
    <variation>PARQ</variation>
    <location>
        <begin position="99"/>
        <end position="102"/>
    </location>
</feature>
<accession>Q0DWC7</accession>
<accession>A0A0P0VRB9</accession>
<accession>Q6K707</accession>
<accession>Q6K708</accession>
<accession>Q944U1</accession>
<organism>
    <name type="scientific">Oryza sativa subsp. japonica</name>
    <name type="common">Rice</name>
    <dbReference type="NCBI Taxonomy" id="39947"/>
    <lineage>
        <taxon>Eukaryota</taxon>
        <taxon>Viridiplantae</taxon>
        <taxon>Streptophyta</taxon>
        <taxon>Embryophyta</taxon>
        <taxon>Tracheophyta</taxon>
        <taxon>Spermatophyta</taxon>
        <taxon>Magnoliopsida</taxon>
        <taxon>Liliopsida</taxon>
        <taxon>Poales</taxon>
        <taxon>Poaceae</taxon>
        <taxon>BOP clade</taxon>
        <taxon>Oryzoideae</taxon>
        <taxon>Oryzeae</taxon>
        <taxon>Oryzinae</taxon>
        <taxon>Oryza</taxon>
        <taxon>Oryza sativa</taxon>
    </lineage>
</organism>
<dbReference type="EC" id="2.7.13.3" evidence="6"/>
<dbReference type="EMBL" id="AF420318">
    <property type="protein sequence ID" value="AAL29303.2"/>
    <property type="molecule type" value="mRNA"/>
</dbReference>
<dbReference type="EMBL" id="AP004020">
    <property type="protein sequence ID" value="BAD22879.1"/>
    <property type="molecule type" value="Genomic_DNA"/>
</dbReference>
<dbReference type="EMBL" id="AP004020">
    <property type="protein sequence ID" value="BAD22880.1"/>
    <property type="status" value="ALT_SEQ"/>
    <property type="molecule type" value="Genomic_DNA"/>
</dbReference>
<dbReference type="EMBL" id="AP004878">
    <property type="protein sequence ID" value="BAD23111.1"/>
    <property type="molecule type" value="Genomic_DNA"/>
</dbReference>
<dbReference type="EMBL" id="AP004878">
    <property type="protein sequence ID" value="BAD23112.1"/>
    <property type="status" value="ALT_SEQ"/>
    <property type="molecule type" value="Genomic_DNA"/>
</dbReference>
<dbReference type="EMBL" id="AP008208">
    <property type="protein sequence ID" value="BAF10461.1"/>
    <property type="molecule type" value="Genomic_DNA"/>
</dbReference>
<dbReference type="EMBL" id="AP014958">
    <property type="protein sequence ID" value="BAS81626.1"/>
    <property type="molecule type" value="Genomic_DNA"/>
</dbReference>
<dbReference type="EMBL" id="AP014958">
    <property type="protein sequence ID" value="BAS81627.1"/>
    <property type="molecule type" value="Genomic_DNA"/>
</dbReference>
<dbReference type="EMBL" id="AK111520">
    <property type="status" value="NOT_ANNOTATED_CDS"/>
    <property type="molecule type" value="mRNA"/>
</dbReference>
<dbReference type="RefSeq" id="XP_015626572.1">
    <molecule id="Q0DWC7-1"/>
    <property type="nucleotide sequence ID" value="XM_015771086.1"/>
</dbReference>
<dbReference type="RefSeq" id="XP_015626573.1">
    <property type="nucleotide sequence ID" value="XM_015771087.1"/>
</dbReference>
<dbReference type="SMR" id="Q0DWC7"/>
<dbReference type="FunCoup" id="Q0DWC7">
    <property type="interactions" value="138"/>
</dbReference>
<dbReference type="STRING" id="39947.Q0DWC7"/>
<dbReference type="PaxDb" id="39947-Q0DWC7"/>
<dbReference type="EnsemblPlants" id="Os02t0820900-03">
    <molecule id="Q0DWC7-1"/>
    <property type="protein sequence ID" value="Os02t0820900-03"/>
    <property type="gene ID" value="Os02g0820900"/>
</dbReference>
<dbReference type="GeneID" id="4331174"/>
<dbReference type="Gramene" id="Os02t0820900-03">
    <molecule id="Q0DWC7-1"/>
    <property type="protein sequence ID" value="Os02t0820900-03"/>
    <property type="gene ID" value="Os02g0820900"/>
</dbReference>
<dbReference type="KEGG" id="dosa:Os02g0820900"/>
<dbReference type="eggNOG" id="KOG0519">
    <property type="taxonomic scope" value="Eukaryota"/>
</dbReference>
<dbReference type="InParanoid" id="Q0DWC7"/>
<dbReference type="OMA" id="GRHEMEI"/>
<dbReference type="OrthoDB" id="60033at2759"/>
<dbReference type="PlantReactome" id="R-OSA-5225756">
    <property type="pathway name" value="Ethylene mediated signaling"/>
</dbReference>
<dbReference type="Proteomes" id="UP000000763">
    <property type="component" value="Chromosome 2"/>
</dbReference>
<dbReference type="Proteomes" id="UP000059680">
    <property type="component" value="Chromosome 2"/>
</dbReference>
<dbReference type="ExpressionAtlas" id="Q0DWC7">
    <property type="expression patterns" value="baseline and differential"/>
</dbReference>
<dbReference type="GO" id="GO:0005783">
    <property type="term" value="C:endoplasmic reticulum"/>
    <property type="evidence" value="ECO:0000318"/>
    <property type="project" value="GO_Central"/>
</dbReference>
<dbReference type="GO" id="GO:0005789">
    <property type="term" value="C:endoplasmic reticulum membrane"/>
    <property type="evidence" value="ECO:0007669"/>
    <property type="project" value="UniProtKB-SubCell"/>
</dbReference>
<dbReference type="GO" id="GO:0005524">
    <property type="term" value="F:ATP binding"/>
    <property type="evidence" value="ECO:0007669"/>
    <property type="project" value="UniProtKB-KW"/>
</dbReference>
<dbReference type="GO" id="GO:0051740">
    <property type="term" value="F:ethylene binding"/>
    <property type="evidence" value="ECO:0000318"/>
    <property type="project" value="GO_Central"/>
</dbReference>
<dbReference type="GO" id="GO:0038199">
    <property type="term" value="F:ethylene receptor activity"/>
    <property type="evidence" value="ECO:0000318"/>
    <property type="project" value="GO_Central"/>
</dbReference>
<dbReference type="GO" id="GO:0046872">
    <property type="term" value="F:metal ion binding"/>
    <property type="evidence" value="ECO:0007669"/>
    <property type="project" value="UniProtKB-KW"/>
</dbReference>
<dbReference type="GO" id="GO:0000155">
    <property type="term" value="F:phosphorelay sensor kinase activity"/>
    <property type="evidence" value="ECO:0007669"/>
    <property type="project" value="InterPro"/>
</dbReference>
<dbReference type="GO" id="GO:0010105">
    <property type="term" value="P:negative regulation of ethylene-activated signaling pathway"/>
    <property type="evidence" value="ECO:0007669"/>
    <property type="project" value="UniProtKB-ARBA"/>
</dbReference>
<dbReference type="CDD" id="cd16938">
    <property type="entry name" value="HATPase_ETR2_ERS2-EIN4-like"/>
    <property type="match status" value="1"/>
</dbReference>
<dbReference type="CDD" id="cd00082">
    <property type="entry name" value="HisKA"/>
    <property type="match status" value="1"/>
</dbReference>
<dbReference type="FunFam" id="1.10.287.130:FF:000004">
    <property type="entry name" value="Ethylene receptor 1"/>
    <property type="match status" value="1"/>
</dbReference>
<dbReference type="Gene3D" id="1.10.287.130">
    <property type="match status" value="1"/>
</dbReference>
<dbReference type="Gene3D" id="3.30.450.40">
    <property type="match status" value="1"/>
</dbReference>
<dbReference type="Gene3D" id="3.40.50.2300">
    <property type="match status" value="1"/>
</dbReference>
<dbReference type="Gene3D" id="3.30.565.10">
    <property type="entry name" value="Histidine kinase-like ATPase, C-terminal domain"/>
    <property type="match status" value="1"/>
</dbReference>
<dbReference type="InterPro" id="IPR011006">
    <property type="entry name" value="CheY-like_superfamily"/>
</dbReference>
<dbReference type="InterPro" id="IPR003018">
    <property type="entry name" value="GAF"/>
</dbReference>
<dbReference type="InterPro" id="IPR029016">
    <property type="entry name" value="GAF-like_dom_sf"/>
</dbReference>
<dbReference type="InterPro" id="IPR036890">
    <property type="entry name" value="HATPase_C_sf"/>
</dbReference>
<dbReference type="InterPro" id="IPR005467">
    <property type="entry name" value="His_kinase_dom"/>
</dbReference>
<dbReference type="InterPro" id="IPR003661">
    <property type="entry name" value="HisK_dim/P_dom"/>
</dbReference>
<dbReference type="InterPro" id="IPR036097">
    <property type="entry name" value="HisK_dim/P_sf"/>
</dbReference>
<dbReference type="InterPro" id="IPR001789">
    <property type="entry name" value="Sig_transdc_resp-reg_receiver"/>
</dbReference>
<dbReference type="PANTHER" id="PTHR24423:SF624">
    <property type="entry name" value="ETHYLENE RECEPTOR 3"/>
    <property type="match status" value="1"/>
</dbReference>
<dbReference type="PANTHER" id="PTHR24423">
    <property type="entry name" value="TWO-COMPONENT SENSOR HISTIDINE KINASE"/>
    <property type="match status" value="1"/>
</dbReference>
<dbReference type="Pfam" id="PF25487">
    <property type="entry name" value="ETR1_N"/>
    <property type="match status" value="1"/>
</dbReference>
<dbReference type="Pfam" id="PF01590">
    <property type="entry name" value="GAF"/>
    <property type="match status" value="1"/>
</dbReference>
<dbReference type="Pfam" id="PF00512">
    <property type="entry name" value="HisKA"/>
    <property type="match status" value="1"/>
</dbReference>
<dbReference type="Pfam" id="PF00072">
    <property type="entry name" value="Response_reg"/>
    <property type="match status" value="1"/>
</dbReference>
<dbReference type="SMART" id="SM00065">
    <property type="entry name" value="GAF"/>
    <property type="match status" value="1"/>
</dbReference>
<dbReference type="SMART" id="SM00388">
    <property type="entry name" value="HisKA"/>
    <property type="match status" value="1"/>
</dbReference>
<dbReference type="SMART" id="SM00448">
    <property type="entry name" value="REC"/>
    <property type="match status" value="1"/>
</dbReference>
<dbReference type="SUPFAM" id="SSF55874">
    <property type="entry name" value="ATPase domain of HSP90 chaperone/DNA topoisomerase II/histidine kinase"/>
    <property type="match status" value="1"/>
</dbReference>
<dbReference type="SUPFAM" id="SSF52172">
    <property type="entry name" value="CheY-like"/>
    <property type="match status" value="1"/>
</dbReference>
<dbReference type="SUPFAM" id="SSF55781">
    <property type="entry name" value="GAF domain-like"/>
    <property type="match status" value="1"/>
</dbReference>
<dbReference type="SUPFAM" id="SSF47384">
    <property type="entry name" value="Homodimeric domain of signal transducing histidine kinase"/>
    <property type="match status" value="1"/>
</dbReference>
<dbReference type="PROSITE" id="PS50109">
    <property type="entry name" value="HIS_KIN"/>
    <property type="match status" value="1"/>
</dbReference>
<dbReference type="PROSITE" id="PS50110">
    <property type="entry name" value="RESPONSE_REGULATORY"/>
    <property type="match status" value="1"/>
</dbReference>
<keyword id="KW-0025">Alternative splicing</keyword>
<keyword id="KW-0067">ATP-binding</keyword>
<keyword id="KW-0175">Coiled coil</keyword>
<keyword id="KW-0186">Copper</keyword>
<keyword id="KW-0256">Endoplasmic reticulum</keyword>
<keyword id="KW-0936">Ethylene signaling pathway</keyword>
<keyword id="KW-0418">Kinase</keyword>
<keyword id="KW-0472">Membrane</keyword>
<keyword id="KW-0479">Metal-binding</keyword>
<keyword id="KW-0547">Nucleotide-binding</keyword>
<keyword id="KW-0675">Receptor</keyword>
<keyword id="KW-1185">Reference proteome</keyword>
<keyword id="KW-0808">Transferase</keyword>
<keyword id="KW-0812">Transmembrane</keyword>
<keyword id="KW-1133">Transmembrane helix</keyword>
<keyword id="KW-0902">Two-component regulatory system</keyword>